<organism>
    <name type="scientific">Shigella boydii serotype 4 (strain Sb227)</name>
    <dbReference type="NCBI Taxonomy" id="300268"/>
    <lineage>
        <taxon>Bacteria</taxon>
        <taxon>Pseudomonadati</taxon>
        <taxon>Pseudomonadota</taxon>
        <taxon>Gammaproteobacteria</taxon>
        <taxon>Enterobacterales</taxon>
        <taxon>Enterobacteriaceae</taxon>
        <taxon>Shigella</taxon>
    </lineage>
</organism>
<name>RS8_SHIBS</name>
<proteinExistence type="inferred from homology"/>
<accession>Q31VX0</accession>
<sequence length="130" mass="14127">MSMQDPIADMLTRIRNGQAANKAAVTMPSSKLKVAIANVLKEEGFIEDFKVEGDTKPELELTLKYFQGKAVVESIQRVSRPGLRIYKRKDELPKVMAGLGIAVVSTSKGVMTDRAARQAGLGGEIICYVA</sequence>
<reference key="1">
    <citation type="journal article" date="2005" name="Nucleic Acids Res.">
        <title>Genome dynamics and diversity of Shigella species, the etiologic agents of bacillary dysentery.</title>
        <authorList>
            <person name="Yang F."/>
            <person name="Yang J."/>
            <person name="Zhang X."/>
            <person name="Chen L."/>
            <person name="Jiang Y."/>
            <person name="Yan Y."/>
            <person name="Tang X."/>
            <person name="Wang J."/>
            <person name="Xiong Z."/>
            <person name="Dong J."/>
            <person name="Xue Y."/>
            <person name="Zhu Y."/>
            <person name="Xu X."/>
            <person name="Sun L."/>
            <person name="Chen S."/>
            <person name="Nie H."/>
            <person name="Peng J."/>
            <person name="Xu J."/>
            <person name="Wang Y."/>
            <person name="Yuan Z."/>
            <person name="Wen Y."/>
            <person name="Yao Z."/>
            <person name="Shen Y."/>
            <person name="Qiang B."/>
            <person name="Hou Y."/>
            <person name="Yu J."/>
            <person name="Jin Q."/>
        </authorList>
    </citation>
    <scope>NUCLEOTIDE SEQUENCE [LARGE SCALE GENOMIC DNA]</scope>
    <source>
        <strain>Sb227</strain>
    </source>
</reference>
<comment type="function">
    <text evidence="2">One of the primary rRNA binding proteins, it binds directly to 16S rRNA central domain where it helps coordinate assembly of the platform of the 30S subunit.</text>
</comment>
<comment type="subunit">
    <text evidence="2">Part of the 30S ribosomal subunit. Contacts proteins S5 and S12.</text>
</comment>
<comment type="similarity">
    <text evidence="2">Belongs to the universal ribosomal protein uS8 family.</text>
</comment>
<gene>
    <name evidence="2" type="primary">rpsH</name>
    <name type="ordered locus">SBO_3300</name>
</gene>
<dbReference type="EMBL" id="CP000036">
    <property type="protein sequence ID" value="ABB67788.1"/>
    <property type="molecule type" value="Genomic_DNA"/>
</dbReference>
<dbReference type="RefSeq" id="WP_000062611.1">
    <property type="nucleotide sequence ID" value="NC_007613.1"/>
</dbReference>
<dbReference type="SMR" id="Q31VX0"/>
<dbReference type="GeneID" id="93778681"/>
<dbReference type="KEGG" id="sbo:SBO_3300"/>
<dbReference type="HOGENOM" id="CLU_098428_0_0_6"/>
<dbReference type="Proteomes" id="UP000007067">
    <property type="component" value="Chromosome"/>
</dbReference>
<dbReference type="GO" id="GO:1990904">
    <property type="term" value="C:ribonucleoprotein complex"/>
    <property type="evidence" value="ECO:0007669"/>
    <property type="project" value="UniProtKB-KW"/>
</dbReference>
<dbReference type="GO" id="GO:0005840">
    <property type="term" value="C:ribosome"/>
    <property type="evidence" value="ECO:0007669"/>
    <property type="project" value="UniProtKB-KW"/>
</dbReference>
<dbReference type="GO" id="GO:0019843">
    <property type="term" value="F:rRNA binding"/>
    <property type="evidence" value="ECO:0007669"/>
    <property type="project" value="UniProtKB-UniRule"/>
</dbReference>
<dbReference type="GO" id="GO:0003735">
    <property type="term" value="F:structural constituent of ribosome"/>
    <property type="evidence" value="ECO:0007669"/>
    <property type="project" value="InterPro"/>
</dbReference>
<dbReference type="GO" id="GO:0006412">
    <property type="term" value="P:translation"/>
    <property type="evidence" value="ECO:0007669"/>
    <property type="project" value="UniProtKB-UniRule"/>
</dbReference>
<dbReference type="FunFam" id="3.30.1370.30:FF:000003">
    <property type="entry name" value="30S ribosomal protein S8"/>
    <property type="match status" value="1"/>
</dbReference>
<dbReference type="FunFam" id="3.30.1490.10:FF:000001">
    <property type="entry name" value="30S ribosomal protein S8"/>
    <property type="match status" value="1"/>
</dbReference>
<dbReference type="Gene3D" id="3.30.1370.30">
    <property type="match status" value="1"/>
</dbReference>
<dbReference type="Gene3D" id="3.30.1490.10">
    <property type="match status" value="1"/>
</dbReference>
<dbReference type="HAMAP" id="MF_01302_B">
    <property type="entry name" value="Ribosomal_uS8_B"/>
    <property type="match status" value="1"/>
</dbReference>
<dbReference type="InterPro" id="IPR000630">
    <property type="entry name" value="Ribosomal_uS8"/>
</dbReference>
<dbReference type="InterPro" id="IPR047863">
    <property type="entry name" value="Ribosomal_uS8_CS"/>
</dbReference>
<dbReference type="InterPro" id="IPR035987">
    <property type="entry name" value="Ribosomal_uS8_sf"/>
</dbReference>
<dbReference type="NCBIfam" id="NF001109">
    <property type="entry name" value="PRK00136.1"/>
    <property type="match status" value="1"/>
</dbReference>
<dbReference type="PANTHER" id="PTHR11758">
    <property type="entry name" value="40S RIBOSOMAL PROTEIN S15A"/>
    <property type="match status" value="1"/>
</dbReference>
<dbReference type="Pfam" id="PF00410">
    <property type="entry name" value="Ribosomal_S8"/>
    <property type="match status" value="1"/>
</dbReference>
<dbReference type="SUPFAM" id="SSF56047">
    <property type="entry name" value="Ribosomal protein S8"/>
    <property type="match status" value="1"/>
</dbReference>
<dbReference type="PROSITE" id="PS00053">
    <property type="entry name" value="RIBOSOMAL_S8"/>
    <property type="match status" value="1"/>
</dbReference>
<protein>
    <recommendedName>
        <fullName evidence="2">Small ribosomal subunit protein uS8</fullName>
    </recommendedName>
    <alternativeName>
        <fullName evidence="3">30S ribosomal protein S8</fullName>
    </alternativeName>
</protein>
<evidence type="ECO:0000250" key="1"/>
<evidence type="ECO:0000255" key="2">
    <source>
        <dbReference type="HAMAP-Rule" id="MF_01302"/>
    </source>
</evidence>
<evidence type="ECO:0000305" key="3"/>
<keyword id="KW-0687">Ribonucleoprotein</keyword>
<keyword id="KW-0689">Ribosomal protein</keyword>
<keyword id="KW-0694">RNA-binding</keyword>
<keyword id="KW-0699">rRNA-binding</keyword>
<feature type="initiator methionine" description="Removed" evidence="1">
    <location>
        <position position="1"/>
    </location>
</feature>
<feature type="chain" id="PRO_0000225891" description="Small ribosomal subunit protein uS8">
    <location>
        <begin position="2"/>
        <end position="130"/>
    </location>
</feature>